<dbReference type="EC" id="5.4.3.8" evidence="1"/>
<dbReference type="EMBL" id="AP009153">
    <property type="protein sequence ID" value="BAH38217.1"/>
    <property type="molecule type" value="Genomic_DNA"/>
</dbReference>
<dbReference type="RefSeq" id="WP_012682664.1">
    <property type="nucleotide sequence ID" value="NC_012489.1"/>
</dbReference>
<dbReference type="SMR" id="C1A7K7"/>
<dbReference type="STRING" id="379066.GAU_1175"/>
<dbReference type="KEGG" id="gau:GAU_1175"/>
<dbReference type="eggNOG" id="COG0001">
    <property type="taxonomic scope" value="Bacteria"/>
</dbReference>
<dbReference type="HOGENOM" id="CLU_016922_1_5_0"/>
<dbReference type="OrthoDB" id="9801052at2"/>
<dbReference type="UniPathway" id="UPA00251">
    <property type="reaction ID" value="UER00317"/>
</dbReference>
<dbReference type="Proteomes" id="UP000002209">
    <property type="component" value="Chromosome"/>
</dbReference>
<dbReference type="GO" id="GO:0005737">
    <property type="term" value="C:cytoplasm"/>
    <property type="evidence" value="ECO:0007669"/>
    <property type="project" value="UniProtKB-SubCell"/>
</dbReference>
<dbReference type="GO" id="GO:0042286">
    <property type="term" value="F:glutamate-1-semialdehyde 2,1-aminomutase activity"/>
    <property type="evidence" value="ECO:0007669"/>
    <property type="project" value="UniProtKB-UniRule"/>
</dbReference>
<dbReference type="GO" id="GO:0030170">
    <property type="term" value="F:pyridoxal phosphate binding"/>
    <property type="evidence" value="ECO:0007669"/>
    <property type="project" value="InterPro"/>
</dbReference>
<dbReference type="GO" id="GO:0008483">
    <property type="term" value="F:transaminase activity"/>
    <property type="evidence" value="ECO:0007669"/>
    <property type="project" value="InterPro"/>
</dbReference>
<dbReference type="GO" id="GO:0006782">
    <property type="term" value="P:protoporphyrinogen IX biosynthetic process"/>
    <property type="evidence" value="ECO:0007669"/>
    <property type="project" value="UniProtKB-UniRule"/>
</dbReference>
<dbReference type="CDD" id="cd00610">
    <property type="entry name" value="OAT_like"/>
    <property type="match status" value="1"/>
</dbReference>
<dbReference type="FunFam" id="3.40.640.10:FF:000021">
    <property type="entry name" value="Glutamate-1-semialdehyde 2,1-aminomutase"/>
    <property type="match status" value="1"/>
</dbReference>
<dbReference type="Gene3D" id="3.90.1150.10">
    <property type="entry name" value="Aspartate Aminotransferase, domain 1"/>
    <property type="match status" value="1"/>
</dbReference>
<dbReference type="Gene3D" id="3.40.640.10">
    <property type="entry name" value="Type I PLP-dependent aspartate aminotransferase-like (Major domain)"/>
    <property type="match status" value="1"/>
</dbReference>
<dbReference type="HAMAP" id="MF_00375">
    <property type="entry name" value="HemL_aminotrans_3"/>
    <property type="match status" value="1"/>
</dbReference>
<dbReference type="InterPro" id="IPR004639">
    <property type="entry name" value="4pyrrol_synth_GluAld_NH2Trfase"/>
</dbReference>
<dbReference type="InterPro" id="IPR005814">
    <property type="entry name" value="Aminotrans_3"/>
</dbReference>
<dbReference type="InterPro" id="IPR049704">
    <property type="entry name" value="Aminotrans_3_PPA_site"/>
</dbReference>
<dbReference type="InterPro" id="IPR015424">
    <property type="entry name" value="PyrdxlP-dep_Trfase"/>
</dbReference>
<dbReference type="InterPro" id="IPR015421">
    <property type="entry name" value="PyrdxlP-dep_Trfase_major"/>
</dbReference>
<dbReference type="InterPro" id="IPR015422">
    <property type="entry name" value="PyrdxlP-dep_Trfase_small"/>
</dbReference>
<dbReference type="NCBIfam" id="TIGR00713">
    <property type="entry name" value="hemL"/>
    <property type="match status" value="1"/>
</dbReference>
<dbReference type="NCBIfam" id="NF000818">
    <property type="entry name" value="PRK00062.1"/>
    <property type="match status" value="1"/>
</dbReference>
<dbReference type="PANTHER" id="PTHR43713">
    <property type="entry name" value="GLUTAMATE-1-SEMIALDEHYDE 2,1-AMINOMUTASE"/>
    <property type="match status" value="1"/>
</dbReference>
<dbReference type="PANTHER" id="PTHR43713:SF3">
    <property type="entry name" value="GLUTAMATE-1-SEMIALDEHYDE 2,1-AMINOMUTASE 1, CHLOROPLASTIC-RELATED"/>
    <property type="match status" value="1"/>
</dbReference>
<dbReference type="Pfam" id="PF00202">
    <property type="entry name" value="Aminotran_3"/>
    <property type="match status" value="1"/>
</dbReference>
<dbReference type="SUPFAM" id="SSF53383">
    <property type="entry name" value="PLP-dependent transferases"/>
    <property type="match status" value="1"/>
</dbReference>
<dbReference type="PROSITE" id="PS00600">
    <property type="entry name" value="AA_TRANSFER_CLASS_3"/>
    <property type="match status" value="1"/>
</dbReference>
<keyword id="KW-0963">Cytoplasm</keyword>
<keyword id="KW-0413">Isomerase</keyword>
<keyword id="KW-0627">Porphyrin biosynthesis</keyword>
<keyword id="KW-0663">Pyridoxal phosphate</keyword>
<keyword id="KW-1185">Reference proteome</keyword>
<evidence type="ECO:0000255" key="1">
    <source>
        <dbReference type="HAMAP-Rule" id="MF_00375"/>
    </source>
</evidence>
<proteinExistence type="inferred from homology"/>
<feature type="chain" id="PRO_0000382318" description="Glutamate-1-semialdehyde 2,1-aminomutase">
    <location>
        <begin position="1"/>
        <end position="435"/>
    </location>
</feature>
<feature type="modified residue" description="N6-(pyridoxal phosphate)lysine" evidence="1">
    <location>
        <position position="269"/>
    </location>
</feature>
<protein>
    <recommendedName>
        <fullName evidence="1">Glutamate-1-semialdehyde 2,1-aminomutase</fullName>
        <shortName evidence="1">GSA</shortName>
        <ecNumber evidence="1">5.4.3.8</ecNumber>
    </recommendedName>
    <alternativeName>
        <fullName evidence="1">Glutamate-1-semialdehyde aminotransferase</fullName>
        <shortName evidence="1">GSA-AT</shortName>
    </alternativeName>
</protein>
<organism>
    <name type="scientific">Gemmatimonas aurantiaca (strain DSM 14586 / JCM 11422 / NBRC 100505 / T-27)</name>
    <dbReference type="NCBI Taxonomy" id="379066"/>
    <lineage>
        <taxon>Bacteria</taxon>
        <taxon>Pseudomonadati</taxon>
        <taxon>Gemmatimonadota</taxon>
        <taxon>Gemmatimonadia</taxon>
        <taxon>Gemmatimonadales</taxon>
        <taxon>Gemmatimonadaceae</taxon>
        <taxon>Gemmatimonas</taxon>
    </lineage>
</organism>
<accession>C1A7K7</accession>
<gene>
    <name evidence="1" type="primary">hemL</name>
    <name type="ordered locus">GAU_1175</name>
</gene>
<sequence>MTEMVPHARSAEIMARARMRFPGGVNSPVRAFRGVGGEPFVAARGKGARIWDVDGNEYFDYVLSWGPLVLGHAPDVVLHAVSQAMLEGTSFGMPTAREVELADAIAGRMPHLEMVRFTSSGTEATMSIARLARAVTKREHILKFDGCYHGHGDSFLVRAGSGVATLGLPDSPGVPEALAKLTLTCAFNDLDAVERIARDVPLAAIMLEPIVGNSGFIEPTPGFIQGLRRIADETGALLVFDEVMTGFRIAFGGATEYFGVTPDLTALGKVIGGGLPVAAYGGSRTLMEHIAPTGPVYQAGTLSGNPLAMAAGIATLGALTRSVHDEITNQTAALVDGLRGIATRRGVPLSARHVGSMWGFFFRDGDVHSFDDAKQSDVALFRRFFHAARTRGVSLAPSAFEAAFMSAAHGPAEVGETLSRLDDALGAALTDTAGH</sequence>
<reference key="1">
    <citation type="submission" date="2006-03" db="EMBL/GenBank/DDBJ databases">
        <title>Complete genome sequence of Gemmatimonas aurantiaca T-27 that represents a novel phylum Gemmatimonadetes.</title>
        <authorList>
            <person name="Takasaki K."/>
            <person name="Ichikawa N."/>
            <person name="Miura H."/>
            <person name="Matsushita S."/>
            <person name="Watanabe Y."/>
            <person name="Oguchi A."/>
            <person name="Ankai A."/>
            <person name="Yashiro I."/>
            <person name="Takahashi M."/>
            <person name="Terui Y."/>
            <person name="Fukui S."/>
            <person name="Yokoyama H."/>
            <person name="Tanikawa S."/>
            <person name="Hanada S."/>
            <person name="Kamagata Y."/>
            <person name="Fujita N."/>
        </authorList>
    </citation>
    <scope>NUCLEOTIDE SEQUENCE [LARGE SCALE GENOMIC DNA]</scope>
    <source>
        <strain>DSM 14586 / JCM 11422 / NBRC 100505 / T-27</strain>
    </source>
</reference>
<comment type="catalytic activity">
    <reaction evidence="1">
        <text>(S)-4-amino-5-oxopentanoate = 5-aminolevulinate</text>
        <dbReference type="Rhea" id="RHEA:14265"/>
        <dbReference type="ChEBI" id="CHEBI:57501"/>
        <dbReference type="ChEBI" id="CHEBI:356416"/>
        <dbReference type="EC" id="5.4.3.8"/>
    </reaction>
</comment>
<comment type="cofactor">
    <cofactor evidence="1">
        <name>pyridoxal 5'-phosphate</name>
        <dbReference type="ChEBI" id="CHEBI:597326"/>
    </cofactor>
</comment>
<comment type="pathway">
    <text evidence="1">Porphyrin-containing compound metabolism; protoporphyrin-IX biosynthesis; 5-aminolevulinate from L-glutamyl-tRNA(Glu): step 2/2.</text>
</comment>
<comment type="subunit">
    <text evidence="1">Homodimer.</text>
</comment>
<comment type="subcellular location">
    <subcellularLocation>
        <location evidence="1">Cytoplasm</location>
    </subcellularLocation>
</comment>
<comment type="similarity">
    <text evidence="1">Belongs to the class-III pyridoxal-phosphate-dependent aminotransferase family. HemL subfamily.</text>
</comment>
<name>GSA_GEMAT</name>